<proteinExistence type="inferred from homology"/>
<accession>Q213Y7</accession>
<reference key="1">
    <citation type="submission" date="2006-03" db="EMBL/GenBank/DDBJ databases">
        <title>Complete sequence of Rhodopseudomonas palustris BisB18.</title>
        <authorList>
            <consortium name="US DOE Joint Genome Institute"/>
            <person name="Copeland A."/>
            <person name="Lucas S."/>
            <person name="Lapidus A."/>
            <person name="Barry K."/>
            <person name="Detter J.C."/>
            <person name="Glavina del Rio T."/>
            <person name="Hammon N."/>
            <person name="Israni S."/>
            <person name="Dalin E."/>
            <person name="Tice H."/>
            <person name="Pitluck S."/>
            <person name="Chain P."/>
            <person name="Malfatti S."/>
            <person name="Shin M."/>
            <person name="Vergez L."/>
            <person name="Schmutz J."/>
            <person name="Larimer F."/>
            <person name="Land M."/>
            <person name="Hauser L."/>
            <person name="Pelletier D.A."/>
            <person name="Kyrpides N."/>
            <person name="Anderson I."/>
            <person name="Oda Y."/>
            <person name="Harwood C.S."/>
            <person name="Richardson P."/>
        </authorList>
    </citation>
    <scope>NUCLEOTIDE SEQUENCE [LARGE SCALE GENOMIC DNA]</scope>
    <source>
        <strain>BisB18</strain>
    </source>
</reference>
<comment type="function">
    <text evidence="1">Catalyzes the ATP-dependent conversion of 7-carboxy-7-deazaguanine (CDG) to 7-cyano-7-deazaguanine (preQ(0)).</text>
</comment>
<comment type="catalytic activity">
    <reaction evidence="1">
        <text>7-carboxy-7-deazaguanine + NH4(+) + ATP = 7-cyano-7-deazaguanine + ADP + phosphate + H2O + H(+)</text>
        <dbReference type="Rhea" id="RHEA:27982"/>
        <dbReference type="ChEBI" id="CHEBI:15377"/>
        <dbReference type="ChEBI" id="CHEBI:15378"/>
        <dbReference type="ChEBI" id="CHEBI:28938"/>
        <dbReference type="ChEBI" id="CHEBI:30616"/>
        <dbReference type="ChEBI" id="CHEBI:43474"/>
        <dbReference type="ChEBI" id="CHEBI:45075"/>
        <dbReference type="ChEBI" id="CHEBI:61036"/>
        <dbReference type="ChEBI" id="CHEBI:456216"/>
        <dbReference type="EC" id="6.3.4.20"/>
    </reaction>
</comment>
<comment type="cofactor">
    <cofactor evidence="1">
        <name>Zn(2+)</name>
        <dbReference type="ChEBI" id="CHEBI:29105"/>
    </cofactor>
    <text evidence="1">Binds 1 zinc ion per subunit.</text>
</comment>
<comment type="pathway">
    <text evidence="1">Purine metabolism; 7-cyano-7-deazaguanine biosynthesis.</text>
</comment>
<comment type="similarity">
    <text evidence="1">Belongs to the QueC family.</text>
</comment>
<dbReference type="EC" id="6.3.4.20" evidence="1"/>
<dbReference type="EMBL" id="CP000301">
    <property type="protein sequence ID" value="ABD88299.1"/>
    <property type="molecule type" value="Genomic_DNA"/>
</dbReference>
<dbReference type="SMR" id="Q213Y7"/>
<dbReference type="STRING" id="316056.RPC_2751"/>
<dbReference type="KEGG" id="rpc:RPC_2751"/>
<dbReference type="eggNOG" id="COG0603">
    <property type="taxonomic scope" value="Bacteria"/>
</dbReference>
<dbReference type="HOGENOM" id="CLU_081854_0_0_5"/>
<dbReference type="OrthoDB" id="9789567at2"/>
<dbReference type="UniPathway" id="UPA00391"/>
<dbReference type="GO" id="GO:0005524">
    <property type="term" value="F:ATP binding"/>
    <property type="evidence" value="ECO:0007669"/>
    <property type="project" value="UniProtKB-UniRule"/>
</dbReference>
<dbReference type="GO" id="GO:0016879">
    <property type="term" value="F:ligase activity, forming carbon-nitrogen bonds"/>
    <property type="evidence" value="ECO:0007669"/>
    <property type="project" value="UniProtKB-UniRule"/>
</dbReference>
<dbReference type="GO" id="GO:0008270">
    <property type="term" value="F:zinc ion binding"/>
    <property type="evidence" value="ECO:0007669"/>
    <property type="project" value="UniProtKB-UniRule"/>
</dbReference>
<dbReference type="GO" id="GO:0008616">
    <property type="term" value="P:queuosine biosynthetic process"/>
    <property type="evidence" value="ECO:0007669"/>
    <property type="project" value="UniProtKB-UniRule"/>
</dbReference>
<dbReference type="CDD" id="cd01995">
    <property type="entry name" value="QueC-like"/>
    <property type="match status" value="1"/>
</dbReference>
<dbReference type="Gene3D" id="3.40.50.620">
    <property type="entry name" value="HUPs"/>
    <property type="match status" value="1"/>
</dbReference>
<dbReference type="HAMAP" id="MF_01633">
    <property type="entry name" value="QueC"/>
    <property type="match status" value="1"/>
</dbReference>
<dbReference type="InterPro" id="IPR018317">
    <property type="entry name" value="QueC"/>
</dbReference>
<dbReference type="InterPro" id="IPR014729">
    <property type="entry name" value="Rossmann-like_a/b/a_fold"/>
</dbReference>
<dbReference type="NCBIfam" id="TIGR00364">
    <property type="entry name" value="7-cyano-7-deazaguanine synthase QueC"/>
    <property type="match status" value="1"/>
</dbReference>
<dbReference type="PANTHER" id="PTHR42914">
    <property type="entry name" value="7-CYANO-7-DEAZAGUANINE SYNTHASE"/>
    <property type="match status" value="1"/>
</dbReference>
<dbReference type="PANTHER" id="PTHR42914:SF1">
    <property type="entry name" value="7-CYANO-7-DEAZAGUANINE SYNTHASE"/>
    <property type="match status" value="1"/>
</dbReference>
<dbReference type="Pfam" id="PF06508">
    <property type="entry name" value="QueC"/>
    <property type="match status" value="1"/>
</dbReference>
<dbReference type="PIRSF" id="PIRSF006293">
    <property type="entry name" value="ExsB"/>
    <property type="match status" value="1"/>
</dbReference>
<dbReference type="SUPFAM" id="SSF52402">
    <property type="entry name" value="Adenine nucleotide alpha hydrolases-like"/>
    <property type="match status" value="1"/>
</dbReference>
<feature type="chain" id="PRO_0000246907" description="7-cyano-7-deazaguanine synthase">
    <location>
        <begin position="1"/>
        <end position="240"/>
    </location>
</feature>
<feature type="binding site" evidence="1">
    <location>
        <begin position="14"/>
        <end position="24"/>
    </location>
    <ligand>
        <name>ATP</name>
        <dbReference type="ChEBI" id="CHEBI:30616"/>
    </ligand>
</feature>
<feature type="binding site" evidence="1">
    <location>
        <position position="202"/>
    </location>
    <ligand>
        <name>Zn(2+)</name>
        <dbReference type="ChEBI" id="CHEBI:29105"/>
    </ligand>
</feature>
<feature type="binding site" evidence="1">
    <location>
        <position position="217"/>
    </location>
    <ligand>
        <name>Zn(2+)</name>
        <dbReference type="ChEBI" id="CHEBI:29105"/>
    </ligand>
</feature>
<feature type="binding site" evidence="1">
    <location>
        <position position="220"/>
    </location>
    <ligand>
        <name>Zn(2+)</name>
        <dbReference type="ChEBI" id="CHEBI:29105"/>
    </ligand>
</feature>
<feature type="binding site" evidence="1">
    <location>
        <position position="223"/>
    </location>
    <ligand>
        <name>Zn(2+)</name>
        <dbReference type="ChEBI" id="CHEBI:29105"/>
    </ligand>
</feature>
<evidence type="ECO:0000255" key="1">
    <source>
        <dbReference type="HAMAP-Rule" id="MF_01633"/>
    </source>
</evidence>
<gene>
    <name evidence="1" type="primary">queC</name>
    <name type="ordered locus">RPC_2751</name>
</gene>
<protein>
    <recommendedName>
        <fullName evidence="1">7-cyano-7-deazaguanine synthase</fullName>
        <ecNumber evidence="1">6.3.4.20</ecNumber>
    </recommendedName>
    <alternativeName>
        <fullName evidence="1">7-cyano-7-carbaguanine synthase</fullName>
    </alternativeName>
    <alternativeName>
        <fullName evidence="1">PreQ(0) synthase</fullName>
    </alternativeName>
    <alternativeName>
        <fullName evidence="1">Queuosine biosynthesis protein QueC</fullName>
    </alternativeName>
</protein>
<name>QUEC_RHOPB</name>
<sequence>MSQILQHDAALVLFSGGQDSATCLAWTLSRFARVETLGFDYGQRHAVELDCRDRLIDGLKQIHPDWANKLGDAHTLSIPTLATISDTALTRDVAIAMGADGLPNTFVPGRNLLFLTFAAALAYRRGIGGLVGGMCETDYSGYPDCRDATLKALTTALNLGMATDFELHTPLMWRDKAATWALAQDLGGDALVDLIREHSHTCYLGERGARHDWGYGCGECPACQLRAKGWREYREAGTAT</sequence>
<organism>
    <name type="scientific">Rhodopseudomonas palustris (strain BisB18)</name>
    <dbReference type="NCBI Taxonomy" id="316056"/>
    <lineage>
        <taxon>Bacteria</taxon>
        <taxon>Pseudomonadati</taxon>
        <taxon>Pseudomonadota</taxon>
        <taxon>Alphaproteobacteria</taxon>
        <taxon>Hyphomicrobiales</taxon>
        <taxon>Nitrobacteraceae</taxon>
        <taxon>Rhodopseudomonas</taxon>
    </lineage>
</organism>
<keyword id="KW-0067">ATP-binding</keyword>
<keyword id="KW-0436">Ligase</keyword>
<keyword id="KW-0479">Metal-binding</keyword>
<keyword id="KW-0547">Nucleotide-binding</keyword>
<keyword id="KW-0671">Queuosine biosynthesis</keyword>
<keyword id="KW-0862">Zinc</keyword>